<protein>
    <recommendedName>
        <fullName evidence="1">Cobalt-precorrin-5B C(1)-methyltransferase</fullName>
        <ecNumber evidence="1">2.1.1.195</ecNumber>
    </recommendedName>
    <alternativeName>
        <fullName evidence="1">Cobalt-precorrin-6A synthase</fullName>
    </alternativeName>
</protein>
<keyword id="KW-0169">Cobalamin biosynthesis</keyword>
<keyword id="KW-0489">Methyltransferase</keyword>
<keyword id="KW-1185">Reference proteome</keyword>
<keyword id="KW-0949">S-adenosyl-L-methionine</keyword>
<keyword id="KW-0808">Transferase</keyword>
<organism>
    <name type="scientific">Methanospirillum hungatei JF-1 (strain ATCC 27890 / DSM 864 / NBRC 100397 / JF-1)</name>
    <dbReference type="NCBI Taxonomy" id="323259"/>
    <lineage>
        <taxon>Archaea</taxon>
        <taxon>Methanobacteriati</taxon>
        <taxon>Methanobacteriota</taxon>
        <taxon>Stenosarchaea group</taxon>
        <taxon>Methanomicrobia</taxon>
        <taxon>Methanomicrobiales</taxon>
        <taxon>Methanospirillaceae</taxon>
        <taxon>Methanospirillum</taxon>
    </lineage>
</organism>
<evidence type="ECO:0000255" key="1">
    <source>
        <dbReference type="HAMAP-Rule" id="MF_00787"/>
    </source>
</evidence>
<proteinExistence type="inferred from homology"/>
<feature type="chain" id="PRO_0000257787" description="Cobalt-precorrin-5B C(1)-methyltransferase">
    <location>
        <begin position="1"/>
        <end position="335"/>
    </location>
</feature>
<gene>
    <name evidence="1" type="primary">cbiD</name>
    <name type="ordered locus">Mhun_3215</name>
</gene>
<sequence length="335" mass="36021">MQDPVSGFIYPEEWISLCTDETERLLVSQGLAVLTSDGTIRRRGFTTGSSASAAAKASVLSLTKTGFDEVSILTPAGIRVQIPVTIARGTGECRKYSGDYPGDVTAGLVFTAEATPADSGTTLVFGEGIGRWSRDTPRYKTGDPAVSCQAMDEIKNAIEEAVQETGIPGVSVRIFAREGRIVAEKTLNQMVGVVGGISVLGTTGFVEPWDDHLEQTVCDRAVHAERVVLTTGRIGMRYARMLFPDHEVILAGSRLGTIIPHLTGEVIICGLPALVLKYINPVILEGTGFSTVEEFMTNDRFLPAMQTSFQIYKSAHPNVRIVVVNREGAIIGDSQ</sequence>
<comment type="function">
    <text evidence="1">Catalyzes the methylation of C-1 in cobalt-precorrin-5B to form cobalt-precorrin-6A.</text>
</comment>
<comment type="catalytic activity">
    <reaction evidence="1">
        <text>Co-precorrin-5B + S-adenosyl-L-methionine = Co-precorrin-6A + S-adenosyl-L-homocysteine</text>
        <dbReference type="Rhea" id="RHEA:26285"/>
        <dbReference type="ChEBI" id="CHEBI:57856"/>
        <dbReference type="ChEBI" id="CHEBI:59789"/>
        <dbReference type="ChEBI" id="CHEBI:60063"/>
        <dbReference type="ChEBI" id="CHEBI:60064"/>
        <dbReference type="EC" id="2.1.1.195"/>
    </reaction>
</comment>
<comment type="pathway">
    <text evidence="1">Cofactor biosynthesis; adenosylcobalamin biosynthesis; cob(II)yrinate a,c-diamide from sirohydrochlorin (anaerobic route): step 6/10.</text>
</comment>
<comment type="similarity">
    <text evidence="1">Belongs to the CbiD family.</text>
</comment>
<reference key="1">
    <citation type="journal article" date="2016" name="Stand. Genomic Sci.">
        <title>Complete genome sequence of Methanospirillum hungatei type strain JF1.</title>
        <authorList>
            <person name="Gunsalus R.P."/>
            <person name="Cook L.E."/>
            <person name="Crable B."/>
            <person name="Rohlin L."/>
            <person name="McDonald E."/>
            <person name="Mouttaki H."/>
            <person name="Sieber J.R."/>
            <person name="Poweleit N."/>
            <person name="Zhou H."/>
            <person name="Lapidus A.L."/>
            <person name="Daligault H.E."/>
            <person name="Land M."/>
            <person name="Gilna P."/>
            <person name="Ivanova N."/>
            <person name="Kyrpides N."/>
            <person name="Culley D.E."/>
            <person name="McInerney M.J."/>
        </authorList>
    </citation>
    <scope>NUCLEOTIDE SEQUENCE [LARGE SCALE GENOMIC DNA]</scope>
    <source>
        <strain>ATCC 27890 / DSM 864 / NBRC 100397 / JF-1</strain>
    </source>
</reference>
<name>CBID_METHJ</name>
<accession>Q2FRR2</accession>
<dbReference type="EC" id="2.1.1.195" evidence="1"/>
<dbReference type="EMBL" id="CP000254">
    <property type="protein sequence ID" value="ABD42897.1"/>
    <property type="molecule type" value="Genomic_DNA"/>
</dbReference>
<dbReference type="RefSeq" id="WP_011450142.1">
    <property type="nucleotide sequence ID" value="NC_007796.1"/>
</dbReference>
<dbReference type="SMR" id="Q2FRR2"/>
<dbReference type="FunCoup" id="Q2FRR2">
    <property type="interactions" value="88"/>
</dbReference>
<dbReference type="STRING" id="323259.Mhun_3215"/>
<dbReference type="EnsemblBacteria" id="ABD42897">
    <property type="protein sequence ID" value="ABD42897"/>
    <property type="gene ID" value="Mhun_3215"/>
</dbReference>
<dbReference type="GeneID" id="3922268"/>
<dbReference type="KEGG" id="mhu:Mhun_3215"/>
<dbReference type="eggNOG" id="arCOG04383">
    <property type="taxonomic scope" value="Archaea"/>
</dbReference>
<dbReference type="HOGENOM" id="CLU_820433_0_0_2"/>
<dbReference type="InParanoid" id="Q2FRR2"/>
<dbReference type="OrthoDB" id="10423at2157"/>
<dbReference type="UniPathway" id="UPA00148">
    <property type="reaction ID" value="UER00227"/>
</dbReference>
<dbReference type="Proteomes" id="UP000001941">
    <property type="component" value="Chromosome"/>
</dbReference>
<dbReference type="GO" id="GO:0043780">
    <property type="term" value="F:cobalt-precorrin-5B C1-methyltransferase activity"/>
    <property type="evidence" value="ECO:0007669"/>
    <property type="project" value="RHEA"/>
</dbReference>
<dbReference type="GO" id="GO:0019251">
    <property type="term" value="P:anaerobic cobalamin biosynthetic process"/>
    <property type="evidence" value="ECO:0007669"/>
    <property type="project" value="UniProtKB-UniRule"/>
</dbReference>
<dbReference type="GO" id="GO:0032259">
    <property type="term" value="P:methylation"/>
    <property type="evidence" value="ECO:0007669"/>
    <property type="project" value="UniProtKB-KW"/>
</dbReference>
<dbReference type="Gene3D" id="3.30.2110.10">
    <property type="entry name" value="CbiD-like"/>
    <property type="match status" value="1"/>
</dbReference>
<dbReference type="Gene3D" id="3.40.50.10720">
    <property type="entry name" value="CbiD-like domains"/>
    <property type="match status" value="1"/>
</dbReference>
<dbReference type="HAMAP" id="MF_00787">
    <property type="entry name" value="CbiD"/>
    <property type="match status" value="1"/>
</dbReference>
<dbReference type="InterPro" id="IPR002748">
    <property type="entry name" value="CbiD"/>
</dbReference>
<dbReference type="InterPro" id="IPR036074">
    <property type="entry name" value="CbiD_sf"/>
</dbReference>
<dbReference type="NCBIfam" id="NF000856">
    <property type="entry name" value="PRK00075.2-5"/>
    <property type="match status" value="1"/>
</dbReference>
<dbReference type="PANTHER" id="PTHR35863">
    <property type="entry name" value="COBALT-PRECORRIN-5B C(1)-METHYLTRANSFERASE"/>
    <property type="match status" value="1"/>
</dbReference>
<dbReference type="PANTHER" id="PTHR35863:SF1">
    <property type="entry name" value="COBALT-PRECORRIN-5B C(1)-METHYLTRANSFERASE"/>
    <property type="match status" value="1"/>
</dbReference>
<dbReference type="Pfam" id="PF01888">
    <property type="entry name" value="CbiD"/>
    <property type="match status" value="1"/>
</dbReference>
<dbReference type="SUPFAM" id="SSF111342">
    <property type="entry name" value="CbiD-like"/>
    <property type="match status" value="1"/>
</dbReference>